<gene>
    <name evidence="1" type="primary">rps11</name>
</gene>
<accession>Q9TLV1</accession>
<protein>
    <recommendedName>
        <fullName evidence="1">Small ribosomal subunit protein uS11c</fullName>
    </recommendedName>
    <alternativeName>
        <fullName evidence="2">30S ribosomal protein S11, chloroplastic</fullName>
    </alternativeName>
</protein>
<evidence type="ECO:0000255" key="1">
    <source>
        <dbReference type="HAMAP-Rule" id="MF_01310"/>
    </source>
</evidence>
<evidence type="ECO:0000305" key="2"/>
<reference key="1">
    <citation type="journal article" date="2000" name="J. Mol. Evol.">
        <title>The structure and gene repertoire of an ancient red algal plastid genome.</title>
        <authorList>
            <person name="Gloeckner G."/>
            <person name="Rosenthal A."/>
            <person name="Valentin K.-U."/>
        </authorList>
    </citation>
    <scope>NUCLEOTIDE SEQUENCE [LARGE SCALE GENOMIC DNA]</scope>
    <source>
        <strain>RK-1</strain>
    </source>
</reference>
<dbReference type="EMBL" id="AF022186">
    <property type="protein sequence ID" value="AAF12927.1"/>
    <property type="molecule type" value="Genomic_DNA"/>
</dbReference>
<dbReference type="RefSeq" id="NP_045167.1">
    <property type="nucleotide sequence ID" value="NC_001840.1"/>
</dbReference>
<dbReference type="SMR" id="Q9TLV1"/>
<dbReference type="GeneID" id="800262"/>
<dbReference type="GO" id="GO:0009507">
    <property type="term" value="C:chloroplast"/>
    <property type="evidence" value="ECO:0007669"/>
    <property type="project" value="UniProtKB-SubCell"/>
</dbReference>
<dbReference type="GO" id="GO:1990904">
    <property type="term" value="C:ribonucleoprotein complex"/>
    <property type="evidence" value="ECO:0007669"/>
    <property type="project" value="UniProtKB-KW"/>
</dbReference>
<dbReference type="GO" id="GO:0005840">
    <property type="term" value="C:ribosome"/>
    <property type="evidence" value="ECO:0007669"/>
    <property type="project" value="UniProtKB-KW"/>
</dbReference>
<dbReference type="GO" id="GO:0019843">
    <property type="term" value="F:rRNA binding"/>
    <property type="evidence" value="ECO:0007669"/>
    <property type="project" value="UniProtKB-UniRule"/>
</dbReference>
<dbReference type="GO" id="GO:0003735">
    <property type="term" value="F:structural constituent of ribosome"/>
    <property type="evidence" value="ECO:0007669"/>
    <property type="project" value="InterPro"/>
</dbReference>
<dbReference type="GO" id="GO:0006412">
    <property type="term" value="P:translation"/>
    <property type="evidence" value="ECO:0007669"/>
    <property type="project" value="UniProtKB-UniRule"/>
</dbReference>
<dbReference type="Gene3D" id="3.30.420.80">
    <property type="entry name" value="Ribosomal protein S11"/>
    <property type="match status" value="1"/>
</dbReference>
<dbReference type="HAMAP" id="MF_01310">
    <property type="entry name" value="Ribosomal_uS11"/>
    <property type="match status" value="1"/>
</dbReference>
<dbReference type="InterPro" id="IPR001971">
    <property type="entry name" value="Ribosomal_uS11"/>
</dbReference>
<dbReference type="InterPro" id="IPR019981">
    <property type="entry name" value="Ribosomal_uS11_bac-type"/>
</dbReference>
<dbReference type="InterPro" id="IPR018102">
    <property type="entry name" value="Ribosomal_uS11_CS"/>
</dbReference>
<dbReference type="InterPro" id="IPR036967">
    <property type="entry name" value="Ribosomal_uS11_sf"/>
</dbReference>
<dbReference type="NCBIfam" id="NF003698">
    <property type="entry name" value="PRK05309.1"/>
    <property type="match status" value="1"/>
</dbReference>
<dbReference type="NCBIfam" id="TIGR03632">
    <property type="entry name" value="uS11_bact"/>
    <property type="match status" value="1"/>
</dbReference>
<dbReference type="PANTHER" id="PTHR11759">
    <property type="entry name" value="40S RIBOSOMAL PROTEIN S14/30S RIBOSOMAL PROTEIN S11"/>
    <property type="match status" value="1"/>
</dbReference>
<dbReference type="Pfam" id="PF00411">
    <property type="entry name" value="Ribosomal_S11"/>
    <property type="match status" value="1"/>
</dbReference>
<dbReference type="PIRSF" id="PIRSF002131">
    <property type="entry name" value="Ribosomal_S11"/>
    <property type="match status" value="1"/>
</dbReference>
<dbReference type="SUPFAM" id="SSF53137">
    <property type="entry name" value="Translational machinery components"/>
    <property type="match status" value="1"/>
</dbReference>
<dbReference type="PROSITE" id="PS00054">
    <property type="entry name" value="RIBOSOMAL_S11"/>
    <property type="match status" value="1"/>
</dbReference>
<comment type="subunit">
    <text evidence="1">Part of the 30S ribosomal subunit.</text>
</comment>
<comment type="subcellular location">
    <subcellularLocation>
        <location>Plastid</location>
        <location>Chloroplast</location>
    </subcellularLocation>
</comment>
<comment type="similarity">
    <text evidence="1">Belongs to the universal ribosomal protein uS11 family.</text>
</comment>
<proteinExistence type="inferred from homology"/>
<name>RR11_CYACA</name>
<sequence length="129" mass="13862">MLKQSKKSSKKLKKSVIDGLIIINSTFNNTIVTATDCYGKVIAWASGGTEGFKGAKKGTPFAAQSATEKLIKALLEQGTQRIHISVSGPGPGRETSIRSFQTSGLQIISIKDITSVPFNGCRPPKKRRI</sequence>
<feature type="chain" id="PRO_0000123297" description="Small ribosomal subunit protein uS11c">
    <location>
        <begin position="1"/>
        <end position="129"/>
    </location>
</feature>
<organism>
    <name type="scientific">Cyanidium caldarium</name>
    <name type="common">Red alga</name>
    <dbReference type="NCBI Taxonomy" id="2771"/>
    <lineage>
        <taxon>Eukaryota</taxon>
        <taxon>Rhodophyta</taxon>
        <taxon>Bangiophyceae</taxon>
        <taxon>Cyanidiales</taxon>
        <taxon>Cyanidiaceae</taxon>
        <taxon>Cyanidium</taxon>
    </lineage>
</organism>
<keyword id="KW-0150">Chloroplast</keyword>
<keyword id="KW-0934">Plastid</keyword>
<keyword id="KW-0687">Ribonucleoprotein</keyword>
<keyword id="KW-0689">Ribosomal protein</keyword>
<keyword id="KW-0694">RNA-binding</keyword>
<keyword id="KW-0699">rRNA-binding</keyword>
<geneLocation type="chloroplast"/>